<keyword id="KW-0677">Repeat</keyword>
<keyword id="KW-0808">Transferase</keyword>
<proteinExistence type="inferred from homology"/>
<feature type="chain" id="PRO_0000292725" description="Carnitine operon protein CaiE">
    <location>
        <begin position="1"/>
        <end position="196"/>
    </location>
</feature>
<feature type="region of interest" description="Disordered" evidence="2">
    <location>
        <begin position="173"/>
        <end position="196"/>
    </location>
</feature>
<feature type="compositionally biased region" description="Polar residues" evidence="2">
    <location>
        <begin position="187"/>
        <end position="196"/>
    </location>
</feature>
<organism>
    <name type="scientific">Escherichia coli O6:K15:H31 (strain 536 / UPEC)</name>
    <dbReference type="NCBI Taxonomy" id="362663"/>
    <lineage>
        <taxon>Bacteria</taxon>
        <taxon>Pseudomonadati</taxon>
        <taxon>Pseudomonadota</taxon>
        <taxon>Gammaproteobacteria</taxon>
        <taxon>Enterobacterales</taxon>
        <taxon>Enterobacteriaceae</taxon>
        <taxon>Escherichia</taxon>
    </lineage>
</organism>
<accession>Q0TLV4</accession>
<name>CAIE_ECOL5</name>
<protein>
    <recommendedName>
        <fullName evidence="1">Carnitine operon protein CaiE</fullName>
    </recommendedName>
</protein>
<comment type="function">
    <text evidence="1">Overproduction of CaiE stimulates the activity of CaiB and CaiD.</text>
</comment>
<comment type="pathway">
    <text evidence="1">Amine and polyamine metabolism; carnitine metabolism.</text>
</comment>
<comment type="similarity">
    <text evidence="1">Belongs to the transferase hexapeptide repeat family.</text>
</comment>
<reference key="1">
    <citation type="journal article" date="2006" name="Mol. Microbiol.">
        <title>Role of pathogenicity island-associated integrases in the genome plasticity of uropathogenic Escherichia coli strain 536.</title>
        <authorList>
            <person name="Hochhut B."/>
            <person name="Wilde C."/>
            <person name="Balling G."/>
            <person name="Middendorf B."/>
            <person name="Dobrindt U."/>
            <person name="Brzuszkiewicz E."/>
            <person name="Gottschalk G."/>
            <person name="Carniel E."/>
            <person name="Hacker J."/>
        </authorList>
    </citation>
    <scope>NUCLEOTIDE SEQUENCE [LARGE SCALE GENOMIC DNA]</scope>
    <source>
        <strain>536 / UPEC</strain>
    </source>
</reference>
<dbReference type="EMBL" id="CP000247">
    <property type="protein sequence ID" value="ABG68077.1"/>
    <property type="molecule type" value="Genomic_DNA"/>
</dbReference>
<dbReference type="RefSeq" id="WP_000122880.1">
    <property type="nucleotide sequence ID" value="NC_008253.1"/>
</dbReference>
<dbReference type="SMR" id="Q0TLV4"/>
<dbReference type="KEGG" id="ecp:ECP_0035"/>
<dbReference type="HOGENOM" id="CLU_064827_4_2_6"/>
<dbReference type="UniPathway" id="UPA00117"/>
<dbReference type="Proteomes" id="UP000009182">
    <property type="component" value="Chromosome"/>
</dbReference>
<dbReference type="GO" id="GO:0016740">
    <property type="term" value="F:transferase activity"/>
    <property type="evidence" value="ECO:0007669"/>
    <property type="project" value="UniProtKB-KW"/>
</dbReference>
<dbReference type="GO" id="GO:0009437">
    <property type="term" value="P:carnitine metabolic process"/>
    <property type="evidence" value="ECO:0007669"/>
    <property type="project" value="UniProtKB-UniRule"/>
</dbReference>
<dbReference type="CDD" id="cd04745">
    <property type="entry name" value="LbH_paaY_like"/>
    <property type="match status" value="1"/>
</dbReference>
<dbReference type="FunFam" id="2.160.10.10:FF:000012">
    <property type="entry name" value="Carnitine operon protein CaiE"/>
    <property type="match status" value="1"/>
</dbReference>
<dbReference type="Gene3D" id="2.160.10.10">
    <property type="entry name" value="Hexapeptide repeat proteins"/>
    <property type="match status" value="1"/>
</dbReference>
<dbReference type="HAMAP" id="MF_01525">
    <property type="entry name" value="CaiE"/>
    <property type="match status" value="1"/>
</dbReference>
<dbReference type="InterPro" id="IPR023446">
    <property type="entry name" value="CaiE"/>
</dbReference>
<dbReference type="InterPro" id="IPR001451">
    <property type="entry name" value="Hexapep"/>
</dbReference>
<dbReference type="InterPro" id="IPR050484">
    <property type="entry name" value="Transf_Hexapept/Carb_Anhydrase"/>
</dbReference>
<dbReference type="InterPro" id="IPR011004">
    <property type="entry name" value="Trimer_LpxA-like_sf"/>
</dbReference>
<dbReference type="NCBIfam" id="NF010150">
    <property type="entry name" value="PRK13627.1"/>
    <property type="match status" value="1"/>
</dbReference>
<dbReference type="PANTHER" id="PTHR13061">
    <property type="entry name" value="DYNACTIN SUBUNIT P25"/>
    <property type="match status" value="1"/>
</dbReference>
<dbReference type="PANTHER" id="PTHR13061:SF29">
    <property type="entry name" value="GAMMA CARBONIC ANHYDRASE-LIKE 1, MITOCHONDRIAL-RELATED"/>
    <property type="match status" value="1"/>
</dbReference>
<dbReference type="Pfam" id="PF00132">
    <property type="entry name" value="Hexapep"/>
    <property type="match status" value="1"/>
</dbReference>
<dbReference type="SUPFAM" id="SSF51161">
    <property type="entry name" value="Trimeric LpxA-like enzymes"/>
    <property type="match status" value="1"/>
</dbReference>
<sequence length="196" mass="21159">MSYYAFEGLIPVVHPTAFVHPSAVLIGDVIVGAGVYIGPLASLRGDYGRLIVQAGANIQDGCIMHGYCDTDTIVGENGHIGHGAILHGCVIGRDALVGMNSVIMDGAVIGEESIVAAMSFVKAGFRGEKRQLLMGTPARAVRSVSDDELHWKRLNTKEYQDLVGRCHAALHETQPLRQMEENRPRLQGTTDVTPKR</sequence>
<gene>
    <name evidence="1" type="primary">caiE</name>
    <name type="ordered locus">ECP_0035</name>
</gene>
<evidence type="ECO:0000255" key="1">
    <source>
        <dbReference type="HAMAP-Rule" id="MF_01525"/>
    </source>
</evidence>
<evidence type="ECO:0000256" key="2">
    <source>
        <dbReference type="SAM" id="MobiDB-lite"/>
    </source>
</evidence>